<proteinExistence type="inferred from homology"/>
<sequence length="862" mass="97990">MFLNTLKAVFGTKNDREVKKYFKRVAQINALEGNYQNLSDDELKAEFAKFKEQILSGEKNENDVLNDVFAIVRETGKRTLNMRHFDVQLIGGMVLHDGKIAEMKTGEGKTLVATLPVVLNAMSGKGVHVVTVNDYLAKRDAEQMSAIYNFLGFSVGVVLSSQNSDIEHKQAYDCDITYGTNNEFGFDYLRDNMKFSKAEKVQREHNFVIVDEVDSILIDEARTPLIISGPTNRTLDGYIKANEVAKQMQKGEAVLPPAKPEGDFVVDEKNRNILITEAGIAKAEKLFGVENLYSLDNAILAHQLDQALKAHNLFEKDVHYVLRNNEVIIVDEFTGRLSEGRRFSEGLHQALEAKENVKIQEESQTLADITFQNYFRMYNKLAGMTGTAQTEATEFSQIYSLDVISIPTNIPIKRQDKDDLIYKTQNEKFKAVIEEIKKANAKGQPVLVGTASIERSEVFHNMLVKEKIPHHVLNAKNHEQEALIIQDAGKKGAVTIATNMAGRGVDIKIDDEIRALGGLYIIGTERHESRRIDNQLRGRAGRQGDPGISRFYLSLEDNLLRIFGGDRIKSIMDRLGIEEGESIESRIVTRAVENAQKKVESLHFESRKHLLEYDDVANEQRKTIYRYRNELLDENYDIRAKISQNIAEYSANVMNDYILDESGSNVNFENLKAKILYECSTQISEKDFENLSVIEMQDKLSQILENSYNEKMSRLEIKELRNIERILYLQVLDNAWREHLYQMDILKTGIGLRGYNQKDPLVEYKKESYNLFLELVNRIKFDSIKLLFSVQFNQEEVQNLENKANEENEKLLQSSVEMGASEDNLGEAEFKKVPRNAPCPCGSGKKFKECHGKSGPKQGILA</sequence>
<name>SECA_CAMJR</name>
<feature type="chain" id="PRO_0000320766" description="Protein translocase subunit SecA">
    <location>
        <begin position="1"/>
        <end position="862"/>
    </location>
</feature>
<feature type="binding site" evidence="1">
    <location>
        <position position="88"/>
    </location>
    <ligand>
        <name>ATP</name>
        <dbReference type="ChEBI" id="CHEBI:30616"/>
    </ligand>
</feature>
<feature type="binding site" evidence="1">
    <location>
        <begin position="106"/>
        <end position="110"/>
    </location>
    <ligand>
        <name>ATP</name>
        <dbReference type="ChEBI" id="CHEBI:30616"/>
    </ligand>
</feature>
<feature type="binding site" evidence="1">
    <location>
        <position position="506"/>
    </location>
    <ligand>
        <name>ATP</name>
        <dbReference type="ChEBI" id="CHEBI:30616"/>
    </ligand>
</feature>
<feature type="binding site" evidence="1">
    <location>
        <position position="839"/>
    </location>
    <ligand>
        <name>Zn(2+)</name>
        <dbReference type="ChEBI" id="CHEBI:29105"/>
    </ligand>
</feature>
<feature type="binding site" evidence="1">
    <location>
        <position position="841"/>
    </location>
    <ligand>
        <name>Zn(2+)</name>
        <dbReference type="ChEBI" id="CHEBI:29105"/>
    </ligand>
</feature>
<feature type="binding site" evidence="1">
    <location>
        <position position="850"/>
    </location>
    <ligand>
        <name>Zn(2+)</name>
        <dbReference type="ChEBI" id="CHEBI:29105"/>
    </ligand>
</feature>
<feature type="binding site" evidence="1">
    <location>
        <position position="851"/>
    </location>
    <ligand>
        <name>Zn(2+)</name>
        <dbReference type="ChEBI" id="CHEBI:29105"/>
    </ligand>
</feature>
<organism>
    <name type="scientific">Campylobacter jejuni (strain RM1221)</name>
    <dbReference type="NCBI Taxonomy" id="195099"/>
    <lineage>
        <taxon>Bacteria</taxon>
        <taxon>Pseudomonadati</taxon>
        <taxon>Campylobacterota</taxon>
        <taxon>Epsilonproteobacteria</taxon>
        <taxon>Campylobacterales</taxon>
        <taxon>Campylobacteraceae</taxon>
        <taxon>Campylobacter</taxon>
    </lineage>
</organism>
<keyword id="KW-0067">ATP-binding</keyword>
<keyword id="KW-0997">Cell inner membrane</keyword>
<keyword id="KW-1003">Cell membrane</keyword>
<keyword id="KW-0963">Cytoplasm</keyword>
<keyword id="KW-0472">Membrane</keyword>
<keyword id="KW-0479">Metal-binding</keyword>
<keyword id="KW-0547">Nucleotide-binding</keyword>
<keyword id="KW-0653">Protein transport</keyword>
<keyword id="KW-1278">Translocase</keyword>
<keyword id="KW-0811">Translocation</keyword>
<keyword id="KW-0813">Transport</keyword>
<keyword id="KW-0862">Zinc</keyword>
<comment type="function">
    <text evidence="1">Part of the Sec protein translocase complex. Interacts with the SecYEG preprotein conducting channel. Has a central role in coupling the hydrolysis of ATP to the transfer of proteins into and across the cell membrane, serving as an ATP-driven molecular motor driving the stepwise translocation of polypeptide chains across the membrane.</text>
</comment>
<comment type="catalytic activity">
    <reaction evidence="1">
        <text>ATP + H2O + cellular proteinSide 1 = ADP + phosphate + cellular proteinSide 2.</text>
        <dbReference type="EC" id="7.4.2.8"/>
    </reaction>
</comment>
<comment type="cofactor">
    <cofactor evidence="1">
        <name>Zn(2+)</name>
        <dbReference type="ChEBI" id="CHEBI:29105"/>
    </cofactor>
    <text evidence="1">May bind 1 zinc ion per subunit.</text>
</comment>
<comment type="subunit">
    <text evidence="1">Monomer and homodimer. Part of the essential Sec protein translocation apparatus which comprises SecA, SecYEG and auxiliary proteins SecDF-YajC and YidC.</text>
</comment>
<comment type="subcellular location">
    <subcellularLocation>
        <location evidence="1">Cell inner membrane</location>
        <topology evidence="1">Peripheral membrane protein</topology>
        <orientation evidence="1">Cytoplasmic side</orientation>
    </subcellularLocation>
    <subcellularLocation>
        <location evidence="1">Cytoplasm</location>
    </subcellularLocation>
    <text evidence="1">Distribution is 50-50.</text>
</comment>
<comment type="similarity">
    <text evidence="1">Belongs to the SecA family.</text>
</comment>
<gene>
    <name evidence="1" type="primary">secA</name>
    <name type="ordered locus">CJE1020</name>
</gene>
<evidence type="ECO:0000255" key="1">
    <source>
        <dbReference type="HAMAP-Rule" id="MF_01382"/>
    </source>
</evidence>
<dbReference type="EC" id="7.4.2.8" evidence="1"/>
<dbReference type="EMBL" id="CP000025">
    <property type="protein sequence ID" value="AAW35353.1"/>
    <property type="molecule type" value="Genomic_DNA"/>
</dbReference>
<dbReference type="RefSeq" id="WP_002867439.1">
    <property type="nucleotide sequence ID" value="NC_003912.7"/>
</dbReference>
<dbReference type="SMR" id="Q5HUL7"/>
<dbReference type="KEGG" id="cjr:CJE1020"/>
<dbReference type="HOGENOM" id="CLU_005314_3_0_7"/>
<dbReference type="GO" id="GO:0031522">
    <property type="term" value="C:cell envelope Sec protein transport complex"/>
    <property type="evidence" value="ECO:0007669"/>
    <property type="project" value="TreeGrafter"/>
</dbReference>
<dbReference type="GO" id="GO:0005829">
    <property type="term" value="C:cytosol"/>
    <property type="evidence" value="ECO:0007669"/>
    <property type="project" value="TreeGrafter"/>
</dbReference>
<dbReference type="GO" id="GO:0005886">
    <property type="term" value="C:plasma membrane"/>
    <property type="evidence" value="ECO:0007669"/>
    <property type="project" value="UniProtKB-SubCell"/>
</dbReference>
<dbReference type="GO" id="GO:0005524">
    <property type="term" value="F:ATP binding"/>
    <property type="evidence" value="ECO:0007669"/>
    <property type="project" value="UniProtKB-UniRule"/>
</dbReference>
<dbReference type="GO" id="GO:0046872">
    <property type="term" value="F:metal ion binding"/>
    <property type="evidence" value="ECO:0007669"/>
    <property type="project" value="UniProtKB-KW"/>
</dbReference>
<dbReference type="GO" id="GO:0008564">
    <property type="term" value="F:protein-exporting ATPase activity"/>
    <property type="evidence" value="ECO:0007669"/>
    <property type="project" value="UniProtKB-EC"/>
</dbReference>
<dbReference type="GO" id="GO:0065002">
    <property type="term" value="P:intracellular protein transmembrane transport"/>
    <property type="evidence" value="ECO:0007669"/>
    <property type="project" value="UniProtKB-UniRule"/>
</dbReference>
<dbReference type="GO" id="GO:0017038">
    <property type="term" value="P:protein import"/>
    <property type="evidence" value="ECO:0007669"/>
    <property type="project" value="InterPro"/>
</dbReference>
<dbReference type="GO" id="GO:0006605">
    <property type="term" value="P:protein targeting"/>
    <property type="evidence" value="ECO:0007669"/>
    <property type="project" value="UniProtKB-UniRule"/>
</dbReference>
<dbReference type="GO" id="GO:0043952">
    <property type="term" value="P:protein transport by the Sec complex"/>
    <property type="evidence" value="ECO:0007669"/>
    <property type="project" value="TreeGrafter"/>
</dbReference>
<dbReference type="CDD" id="cd17928">
    <property type="entry name" value="DEXDc_SecA"/>
    <property type="match status" value="1"/>
</dbReference>
<dbReference type="CDD" id="cd18803">
    <property type="entry name" value="SF2_C_secA"/>
    <property type="match status" value="1"/>
</dbReference>
<dbReference type="FunFam" id="3.40.50.300:FF:000429">
    <property type="entry name" value="Preprotein translocase subunit SecA"/>
    <property type="match status" value="1"/>
</dbReference>
<dbReference type="FunFam" id="3.90.1440.10:FF:000001">
    <property type="entry name" value="Preprotein translocase subunit SecA"/>
    <property type="match status" value="1"/>
</dbReference>
<dbReference type="Gene3D" id="1.10.3060.10">
    <property type="entry name" value="Helical scaffold and wing domains of SecA"/>
    <property type="match status" value="1"/>
</dbReference>
<dbReference type="Gene3D" id="3.40.50.300">
    <property type="entry name" value="P-loop containing nucleotide triphosphate hydrolases"/>
    <property type="match status" value="3"/>
</dbReference>
<dbReference type="Gene3D" id="3.90.1440.10">
    <property type="entry name" value="SecA, preprotein cross-linking domain"/>
    <property type="match status" value="1"/>
</dbReference>
<dbReference type="HAMAP" id="MF_01382">
    <property type="entry name" value="SecA"/>
    <property type="match status" value="1"/>
</dbReference>
<dbReference type="InterPro" id="IPR014001">
    <property type="entry name" value="Helicase_ATP-bd"/>
</dbReference>
<dbReference type="InterPro" id="IPR001650">
    <property type="entry name" value="Helicase_C-like"/>
</dbReference>
<dbReference type="InterPro" id="IPR027417">
    <property type="entry name" value="P-loop_NTPase"/>
</dbReference>
<dbReference type="InterPro" id="IPR004027">
    <property type="entry name" value="SEC_C_motif"/>
</dbReference>
<dbReference type="InterPro" id="IPR000185">
    <property type="entry name" value="SecA"/>
</dbReference>
<dbReference type="InterPro" id="IPR011115">
    <property type="entry name" value="SecA_DEAD"/>
</dbReference>
<dbReference type="InterPro" id="IPR014018">
    <property type="entry name" value="SecA_motor_DEAD"/>
</dbReference>
<dbReference type="InterPro" id="IPR011130">
    <property type="entry name" value="SecA_preprotein_X-link_dom"/>
</dbReference>
<dbReference type="InterPro" id="IPR044722">
    <property type="entry name" value="SecA_SF2_C"/>
</dbReference>
<dbReference type="InterPro" id="IPR011116">
    <property type="entry name" value="SecA_Wing/Scaffold"/>
</dbReference>
<dbReference type="InterPro" id="IPR036266">
    <property type="entry name" value="SecA_Wing/Scaffold_sf"/>
</dbReference>
<dbReference type="InterPro" id="IPR036670">
    <property type="entry name" value="SecA_X-link_sf"/>
</dbReference>
<dbReference type="NCBIfam" id="NF006630">
    <property type="entry name" value="PRK09200.1"/>
    <property type="match status" value="1"/>
</dbReference>
<dbReference type="NCBIfam" id="NF009538">
    <property type="entry name" value="PRK12904.1"/>
    <property type="match status" value="1"/>
</dbReference>
<dbReference type="NCBIfam" id="TIGR00963">
    <property type="entry name" value="secA"/>
    <property type="match status" value="1"/>
</dbReference>
<dbReference type="PANTHER" id="PTHR30612:SF0">
    <property type="entry name" value="CHLOROPLAST PROTEIN-TRANSPORTING ATPASE"/>
    <property type="match status" value="1"/>
</dbReference>
<dbReference type="PANTHER" id="PTHR30612">
    <property type="entry name" value="SECA INNER MEMBRANE COMPONENT OF SEC PROTEIN SECRETION SYSTEM"/>
    <property type="match status" value="1"/>
</dbReference>
<dbReference type="Pfam" id="PF21090">
    <property type="entry name" value="P-loop_SecA"/>
    <property type="match status" value="1"/>
</dbReference>
<dbReference type="Pfam" id="PF02810">
    <property type="entry name" value="SEC-C"/>
    <property type="match status" value="1"/>
</dbReference>
<dbReference type="Pfam" id="PF07517">
    <property type="entry name" value="SecA_DEAD"/>
    <property type="match status" value="1"/>
</dbReference>
<dbReference type="Pfam" id="PF01043">
    <property type="entry name" value="SecA_PP_bind"/>
    <property type="match status" value="1"/>
</dbReference>
<dbReference type="Pfam" id="PF07516">
    <property type="entry name" value="SecA_SW"/>
    <property type="match status" value="1"/>
</dbReference>
<dbReference type="PRINTS" id="PR00906">
    <property type="entry name" value="SECA"/>
</dbReference>
<dbReference type="SMART" id="SM00957">
    <property type="entry name" value="SecA_DEAD"/>
    <property type="match status" value="1"/>
</dbReference>
<dbReference type="SMART" id="SM00958">
    <property type="entry name" value="SecA_PP_bind"/>
    <property type="match status" value="1"/>
</dbReference>
<dbReference type="SUPFAM" id="SSF81886">
    <property type="entry name" value="Helical scaffold and wing domains of SecA"/>
    <property type="match status" value="1"/>
</dbReference>
<dbReference type="SUPFAM" id="SSF52540">
    <property type="entry name" value="P-loop containing nucleoside triphosphate hydrolases"/>
    <property type="match status" value="2"/>
</dbReference>
<dbReference type="SUPFAM" id="SSF81767">
    <property type="entry name" value="Pre-protein crosslinking domain of SecA"/>
    <property type="match status" value="1"/>
</dbReference>
<dbReference type="PROSITE" id="PS51196">
    <property type="entry name" value="SECA_MOTOR_DEAD"/>
    <property type="match status" value="1"/>
</dbReference>
<reference key="1">
    <citation type="journal article" date="2005" name="PLoS Biol.">
        <title>Major structural differences and novel potential virulence mechanisms from the genomes of multiple Campylobacter species.</title>
        <authorList>
            <person name="Fouts D.E."/>
            <person name="Mongodin E.F."/>
            <person name="Mandrell R.E."/>
            <person name="Miller W.G."/>
            <person name="Rasko D.A."/>
            <person name="Ravel J."/>
            <person name="Brinkac L.M."/>
            <person name="DeBoy R.T."/>
            <person name="Parker C.T."/>
            <person name="Daugherty S.C."/>
            <person name="Dodson R.J."/>
            <person name="Durkin A.S."/>
            <person name="Madupu R."/>
            <person name="Sullivan S.A."/>
            <person name="Shetty J.U."/>
            <person name="Ayodeji M.A."/>
            <person name="Shvartsbeyn A."/>
            <person name="Schatz M.C."/>
            <person name="Badger J.H."/>
            <person name="Fraser C.M."/>
            <person name="Nelson K.E."/>
        </authorList>
    </citation>
    <scope>NUCLEOTIDE SEQUENCE [LARGE SCALE GENOMIC DNA]</scope>
    <source>
        <strain>RM1221</strain>
    </source>
</reference>
<accession>Q5HUL7</accession>
<protein>
    <recommendedName>
        <fullName evidence="1">Protein translocase subunit SecA</fullName>
        <ecNumber evidence="1">7.4.2.8</ecNumber>
    </recommendedName>
</protein>